<dbReference type="EMBL" id="CU329671">
    <property type="protein sequence ID" value="CAB57927.1"/>
    <property type="molecule type" value="Genomic_DNA"/>
</dbReference>
<dbReference type="PIR" id="T39924">
    <property type="entry name" value="T39924"/>
</dbReference>
<dbReference type="RefSeq" id="NP_595684.1">
    <property type="nucleotide sequence ID" value="NM_001021579.2"/>
</dbReference>
<dbReference type="BioGRID" id="277202">
    <property type="interactions" value="61"/>
</dbReference>
<dbReference type="FunCoup" id="Q9USW1">
    <property type="interactions" value="96"/>
</dbReference>
<dbReference type="IntAct" id="Q9USW1">
    <property type="interactions" value="2"/>
</dbReference>
<dbReference type="STRING" id="284812.Q9USW1"/>
<dbReference type="iPTMnet" id="Q9USW1"/>
<dbReference type="PaxDb" id="4896-SPBC21B10.03c.1"/>
<dbReference type="EnsemblFungi" id="SPBC21B10.03c.1">
    <property type="protein sequence ID" value="SPBC21B10.03c.1:pep"/>
    <property type="gene ID" value="SPBC21B10.03c"/>
</dbReference>
<dbReference type="GeneID" id="2540677"/>
<dbReference type="KEGG" id="spo:2540677"/>
<dbReference type="PomBase" id="SPBC21B10.03c">
    <property type="gene designation" value="ath1"/>
</dbReference>
<dbReference type="VEuPathDB" id="FungiDB:SPBC21B10.03c"/>
<dbReference type="eggNOG" id="KOG2375">
    <property type="taxonomic scope" value="Eukaryota"/>
</dbReference>
<dbReference type="HOGENOM" id="CLU_354943_0_0_1"/>
<dbReference type="InParanoid" id="Q9USW1"/>
<dbReference type="OMA" id="FSCPPTW"/>
<dbReference type="PRO" id="PR:Q9USW1"/>
<dbReference type="Proteomes" id="UP000002485">
    <property type="component" value="Chromosome II"/>
</dbReference>
<dbReference type="GO" id="GO:0032153">
    <property type="term" value="C:cell division site"/>
    <property type="evidence" value="ECO:0007005"/>
    <property type="project" value="PomBase"/>
</dbReference>
<dbReference type="GO" id="GO:0010494">
    <property type="term" value="C:cytoplasmic stress granule"/>
    <property type="evidence" value="ECO:0000269"/>
    <property type="project" value="PomBase"/>
</dbReference>
<dbReference type="GO" id="GO:0005829">
    <property type="term" value="C:cytosol"/>
    <property type="evidence" value="ECO:0007005"/>
    <property type="project" value="PomBase"/>
</dbReference>
<dbReference type="GO" id="GO:0003729">
    <property type="term" value="F:mRNA binding"/>
    <property type="evidence" value="ECO:0000318"/>
    <property type="project" value="GO_Central"/>
</dbReference>
<dbReference type="GO" id="GO:0016071">
    <property type="term" value="P:mRNA metabolic process"/>
    <property type="evidence" value="ECO:0000266"/>
    <property type="project" value="PomBase"/>
</dbReference>
<dbReference type="GO" id="GO:0006417">
    <property type="term" value="P:regulation of translation"/>
    <property type="evidence" value="ECO:0007669"/>
    <property type="project" value="UniProtKB-KW"/>
</dbReference>
<dbReference type="GO" id="GO:0034063">
    <property type="term" value="P:stress granule assembly"/>
    <property type="evidence" value="ECO:0000318"/>
    <property type="project" value="GO_Central"/>
</dbReference>
<dbReference type="InterPro" id="IPR045117">
    <property type="entry name" value="ATXN2-like"/>
</dbReference>
<dbReference type="InterPro" id="IPR009604">
    <property type="entry name" value="LsmAD_domain"/>
</dbReference>
<dbReference type="PANTHER" id="PTHR12854">
    <property type="entry name" value="ATAXIN 2-RELATED"/>
    <property type="match status" value="1"/>
</dbReference>
<dbReference type="PANTHER" id="PTHR12854:SF7">
    <property type="entry name" value="ATAXIN-2 HOMOLOG"/>
    <property type="match status" value="1"/>
</dbReference>
<dbReference type="Pfam" id="PF06741">
    <property type="entry name" value="LsmAD"/>
    <property type="match status" value="1"/>
</dbReference>
<dbReference type="SMART" id="SM01272">
    <property type="entry name" value="LsmAD"/>
    <property type="match status" value="1"/>
</dbReference>
<name>ATH1_SCHPO</name>
<accession>Q9USW1</accession>
<keyword id="KW-0963">Cytoplasm</keyword>
<keyword id="KW-1185">Reference proteome</keyword>
<keyword id="KW-0810">Translation regulation</keyword>
<organism>
    <name type="scientific">Schizosaccharomyces pombe (strain 972 / ATCC 24843)</name>
    <name type="common">Fission yeast</name>
    <dbReference type="NCBI Taxonomy" id="284812"/>
    <lineage>
        <taxon>Eukaryota</taxon>
        <taxon>Fungi</taxon>
        <taxon>Dikarya</taxon>
        <taxon>Ascomycota</taxon>
        <taxon>Taphrinomycotina</taxon>
        <taxon>Schizosaccharomycetes</taxon>
        <taxon>Schizosaccharomycetales</taxon>
        <taxon>Schizosaccharomycetaceae</taxon>
        <taxon>Schizosaccharomyces</taxon>
    </lineage>
</organism>
<protein>
    <recommendedName>
        <fullName evidence="6">Ataxin-2 homolog</fullName>
    </recommendedName>
    <alternativeName>
        <fullName evidence="4">Pab1-binding protein 1</fullName>
    </alternativeName>
    <alternativeName>
        <fullName evidence="4">Poly(A)-binding protein-binding protein</fullName>
    </alternativeName>
</protein>
<sequence>MATRSVSMKQTSQRAASPNKTQGAKKWSAVAARGSKIAQSATNDHRNVESIKVVPENRVRGGVAAKATDSSSNVTSLASSEENVSSVSGSAKSNNSQQRVWKTDVAISAEKRTETRQRELRRWMPDPEDAGVPLAGLEESTDNVEWDQFATNEKLFGVKSHFDEDLYTSRIDRSHPKYKEKEQEADRIAKEIEGTVTNNIHIAEERGLKVDDSGLDEEDLYSGVHRSIDVVRNYTRSNAYNKNNKDQKPKNHEAPHQHPQQKVVPPDDPAIVSHRHLALPRAPGPDSRAAERFFNARRKAGPLSRREKEGQIKEFMQFSQSLKIGSLDSKQPSSTKSVAEVKVADEKQLPDASSQATPADSKEPRKEEAEKPVTSATEVSSEKVEKVDGNTSSPSKEEEKPSTEPEKPSVVTQRKETTGTKLGTKLNAKAISFKPNVAAPVFTPGKFTIPSKPAPVNASRPMMPQQSNNSEASIPSTTPQSPSVVSNGENKPSSSPVFFNGPVSSEKEPILDNFNVFKNVGEEHQGAEQIDKPFSCPPTWNTGPNSLQQTIANSRPEGNSGSAKKAAAANPMIPSIVLPNSAMPSAMPMYPTPTMPYIPVGYPVPGYTPYMRNPSQHTSVAPSPNGTPTSGNSSTVGSPMIGYMAPQFIPPYAMPQFPPSGNGRGASAPATYFVPQMGGMMAYTMNGVPPMYGQYAPNNGMMNMHYPMYGDSRRSNSQRSFNSSNGKRSNVHKNNNASNTFSHSNASTSSSLNAAPNTTAKSSSQTAPPVSKGDATEKTEKDASANQEAKP</sequence>
<proteinExistence type="evidence at protein level"/>
<feature type="chain" id="PRO_0000450800" description="Ataxin-2 homolog">
    <location>
        <begin position="1"/>
        <end position="791"/>
    </location>
</feature>
<feature type="region of interest" description="Disordered" evidence="1">
    <location>
        <begin position="1"/>
        <end position="28"/>
    </location>
</feature>
<feature type="region of interest" description="Disordered" evidence="1">
    <location>
        <begin position="60"/>
        <end position="100"/>
    </location>
</feature>
<feature type="region of interest" description="Disordered" evidence="1">
    <location>
        <begin position="112"/>
        <end position="134"/>
    </location>
</feature>
<feature type="region of interest" description="Disordered" evidence="1">
    <location>
        <begin position="235"/>
        <end position="311"/>
    </location>
</feature>
<feature type="region of interest" description="Disordered" evidence="1">
    <location>
        <begin position="326"/>
        <end position="423"/>
    </location>
</feature>
<feature type="region of interest" description="Disordered" evidence="1">
    <location>
        <begin position="452"/>
        <end position="505"/>
    </location>
</feature>
<feature type="region of interest" description="Disordered" evidence="1">
    <location>
        <begin position="613"/>
        <end position="634"/>
    </location>
</feature>
<feature type="region of interest" description="Disordered" evidence="1">
    <location>
        <begin position="707"/>
        <end position="791"/>
    </location>
</feature>
<feature type="compositionally biased region" description="Polar residues" evidence="1">
    <location>
        <begin position="1"/>
        <end position="22"/>
    </location>
</feature>
<feature type="compositionally biased region" description="Low complexity" evidence="1">
    <location>
        <begin position="76"/>
        <end position="96"/>
    </location>
</feature>
<feature type="compositionally biased region" description="Basic and acidic residues" evidence="1">
    <location>
        <begin position="112"/>
        <end position="125"/>
    </location>
</feature>
<feature type="compositionally biased region" description="Basic and acidic residues" evidence="1">
    <location>
        <begin position="243"/>
        <end position="256"/>
    </location>
</feature>
<feature type="compositionally biased region" description="Polar residues" evidence="1">
    <location>
        <begin position="326"/>
        <end position="337"/>
    </location>
</feature>
<feature type="compositionally biased region" description="Basic and acidic residues" evidence="1">
    <location>
        <begin position="360"/>
        <end position="371"/>
    </location>
</feature>
<feature type="compositionally biased region" description="Basic and acidic residues" evidence="1">
    <location>
        <begin position="395"/>
        <end position="418"/>
    </location>
</feature>
<feature type="compositionally biased region" description="Low complexity" evidence="1">
    <location>
        <begin position="473"/>
        <end position="486"/>
    </location>
</feature>
<feature type="compositionally biased region" description="Polar residues" evidence="1">
    <location>
        <begin position="487"/>
        <end position="497"/>
    </location>
</feature>
<feature type="compositionally biased region" description="Low complexity" evidence="1">
    <location>
        <begin position="715"/>
        <end position="725"/>
    </location>
</feature>
<feature type="compositionally biased region" description="Low complexity" evidence="1">
    <location>
        <begin position="734"/>
        <end position="760"/>
    </location>
</feature>
<feature type="compositionally biased region" description="Basic and acidic residues" evidence="1">
    <location>
        <begin position="774"/>
        <end position="791"/>
    </location>
</feature>
<comment type="function">
    <text evidence="3">Involved in post-transcriptional regulation of gene expression, probably by association with mkt1.</text>
</comment>
<comment type="subunit">
    <text evidence="5">Interacts with mkt1.</text>
</comment>
<comment type="subcellular location">
    <subcellularLocation>
        <location evidence="2">Cytoplasm</location>
    </subcellularLocation>
    <text>Localizes at the barrier septum.</text>
</comment>
<comment type="disruption phenotype">
    <text evidence="3">Impaired RNAi-mediated heterochromatin silencing.</text>
</comment>
<comment type="similarity">
    <text evidence="4">Belongs to the ataxin-2 family.</text>
</comment>
<gene>
    <name evidence="6" type="primary">ath1</name>
    <name evidence="6" type="ORF">SPBC21B10.03c</name>
</gene>
<reference key="1">
    <citation type="journal article" date="2002" name="Nature">
        <title>The genome sequence of Schizosaccharomyces pombe.</title>
        <authorList>
            <person name="Wood V."/>
            <person name="Gwilliam R."/>
            <person name="Rajandream M.A."/>
            <person name="Lyne M.H."/>
            <person name="Lyne R."/>
            <person name="Stewart A."/>
            <person name="Sgouros J.G."/>
            <person name="Peat N."/>
            <person name="Hayles J."/>
            <person name="Baker S.G."/>
            <person name="Basham D."/>
            <person name="Bowman S."/>
            <person name="Brooks K."/>
            <person name="Brown D."/>
            <person name="Brown S."/>
            <person name="Chillingworth T."/>
            <person name="Churcher C.M."/>
            <person name="Collins M."/>
            <person name="Connor R."/>
            <person name="Cronin A."/>
            <person name="Davis P."/>
            <person name="Feltwell T."/>
            <person name="Fraser A."/>
            <person name="Gentles S."/>
            <person name="Goble A."/>
            <person name="Hamlin N."/>
            <person name="Harris D.E."/>
            <person name="Hidalgo J."/>
            <person name="Hodgson G."/>
            <person name="Holroyd S."/>
            <person name="Hornsby T."/>
            <person name="Howarth S."/>
            <person name="Huckle E.J."/>
            <person name="Hunt S."/>
            <person name="Jagels K."/>
            <person name="James K.D."/>
            <person name="Jones L."/>
            <person name="Jones M."/>
            <person name="Leather S."/>
            <person name="McDonald S."/>
            <person name="McLean J."/>
            <person name="Mooney P."/>
            <person name="Moule S."/>
            <person name="Mungall K.L."/>
            <person name="Murphy L.D."/>
            <person name="Niblett D."/>
            <person name="Odell C."/>
            <person name="Oliver K."/>
            <person name="O'Neil S."/>
            <person name="Pearson D."/>
            <person name="Quail M.A."/>
            <person name="Rabbinowitsch E."/>
            <person name="Rutherford K.M."/>
            <person name="Rutter S."/>
            <person name="Saunders D."/>
            <person name="Seeger K."/>
            <person name="Sharp S."/>
            <person name="Skelton J."/>
            <person name="Simmonds M.N."/>
            <person name="Squares R."/>
            <person name="Squares S."/>
            <person name="Stevens K."/>
            <person name="Taylor K."/>
            <person name="Taylor R.G."/>
            <person name="Tivey A."/>
            <person name="Walsh S.V."/>
            <person name="Warren T."/>
            <person name="Whitehead S."/>
            <person name="Woodward J.R."/>
            <person name="Volckaert G."/>
            <person name="Aert R."/>
            <person name="Robben J."/>
            <person name="Grymonprez B."/>
            <person name="Weltjens I."/>
            <person name="Vanstreels E."/>
            <person name="Rieger M."/>
            <person name="Schaefer M."/>
            <person name="Mueller-Auer S."/>
            <person name="Gabel C."/>
            <person name="Fuchs M."/>
            <person name="Duesterhoeft A."/>
            <person name="Fritzc C."/>
            <person name="Holzer E."/>
            <person name="Moestl D."/>
            <person name="Hilbert H."/>
            <person name="Borzym K."/>
            <person name="Langer I."/>
            <person name="Beck A."/>
            <person name="Lehrach H."/>
            <person name="Reinhardt R."/>
            <person name="Pohl T.M."/>
            <person name="Eger P."/>
            <person name="Zimmermann W."/>
            <person name="Wedler H."/>
            <person name="Wambutt R."/>
            <person name="Purnelle B."/>
            <person name="Goffeau A."/>
            <person name="Cadieu E."/>
            <person name="Dreano S."/>
            <person name="Gloux S."/>
            <person name="Lelaure V."/>
            <person name="Mottier S."/>
            <person name="Galibert F."/>
            <person name="Aves S.J."/>
            <person name="Xiang Z."/>
            <person name="Hunt C."/>
            <person name="Moore K."/>
            <person name="Hurst S.M."/>
            <person name="Lucas M."/>
            <person name="Rochet M."/>
            <person name="Gaillardin C."/>
            <person name="Tallada V.A."/>
            <person name="Garzon A."/>
            <person name="Thode G."/>
            <person name="Daga R.R."/>
            <person name="Cruzado L."/>
            <person name="Jimenez J."/>
            <person name="Sanchez M."/>
            <person name="del Rey F."/>
            <person name="Benito J."/>
            <person name="Dominguez A."/>
            <person name="Revuelta J.L."/>
            <person name="Moreno S."/>
            <person name="Armstrong J."/>
            <person name="Forsburg S.L."/>
            <person name="Cerutti L."/>
            <person name="Lowe T."/>
            <person name="McCombie W.R."/>
            <person name="Paulsen I."/>
            <person name="Potashkin J."/>
            <person name="Shpakovski G.V."/>
            <person name="Ussery D."/>
            <person name="Barrell B.G."/>
            <person name="Nurse P."/>
        </authorList>
    </citation>
    <scope>NUCLEOTIDE SEQUENCE [LARGE SCALE GENOMIC DNA]</scope>
    <source>
        <strain>972 / ATCC 24843</strain>
    </source>
</reference>
<reference key="2">
    <citation type="journal article" date="2006" name="Nat. Biotechnol.">
        <title>ORFeome cloning and global analysis of protein localization in the fission yeast Schizosaccharomyces pombe.</title>
        <authorList>
            <person name="Matsuyama A."/>
            <person name="Arai R."/>
            <person name="Yashiroda Y."/>
            <person name="Shirai A."/>
            <person name="Kamata A."/>
            <person name="Sekido S."/>
            <person name="Kobayashi Y."/>
            <person name="Hashimoto A."/>
            <person name="Hamamoto M."/>
            <person name="Hiraoka Y."/>
            <person name="Horinouchi S."/>
            <person name="Yoshida M."/>
        </authorList>
    </citation>
    <scope>SUBCELLULAR LOCATION [LARGE SCALE ANALYSIS]</scope>
</reference>
<reference key="3">
    <citation type="journal article" date="2020" name="Nucleic Acids Res.">
        <title>Mkt1 is required for RNAi-mediated silencing and establishment of heterochromatin in fission yeast.</title>
        <authorList>
            <person name="Taglini F."/>
            <person name="Chapman E."/>
            <person name="van Nues R."/>
            <person name="Theron E."/>
            <person name="Bayne E.H."/>
        </authorList>
    </citation>
    <scope>FUNCTION</scope>
    <scope>INTERACTION WITH MKT1</scope>
    <scope>DISRUPTION PHENOTYPE</scope>
</reference>
<evidence type="ECO:0000256" key="1">
    <source>
        <dbReference type="SAM" id="MobiDB-lite"/>
    </source>
</evidence>
<evidence type="ECO:0000269" key="2">
    <source>
    </source>
</evidence>
<evidence type="ECO:0000269" key="3">
    <source>
    </source>
</evidence>
<evidence type="ECO:0000305" key="4"/>
<evidence type="ECO:0000305" key="5">
    <source>
    </source>
</evidence>
<evidence type="ECO:0000312" key="6">
    <source>
        <dbReference type="PomBase" id="SPBC21B10.03c"/>
    </source>
</evidence>